<reference key="1">
    <citation type="submission" date="2006-08" db="EMBL/GenBank/DDBJ databases">
        <title>Complete sequence of Shewanella sp. MR-4.</title>
        <authorList>
            <consortium name="US DOE Joint Genome Institute"/>
            <person name="Copeland A."/>
            <person name="Lucas S."/>
            <person name="Lapidus A."/>
            <person name="Barry K."/>
            <person name="Detter J.C."/>
            <person name="Glavina del Rio T."/>
            <person name="Hammon N."/>
            <person name="Israni S."/>
            <person name="Dalin E."/>
            <person name="Tice H."/>
            <person name="Pitluck S."/>
            <person name="Kiss H."/>
            <person name="Brettin T."/>
            <person name="Bruce D."/>
            <person name="Han C."/>
            <person name="Tapia R."/>
            <person name="Gilna P."/>
            <person name="Schmutz J."/>
            <person name="Larimer F."/>
            <person name="Land M."/>
            <person name="Hauser L."/>
            <person name="Kyrpides N."/>
            <person name="Mikhailova N."/>
            <person name="Nealson K."/>
            <person name="Konstantinidis K."/>
            <person name="Klappenbach J."/>
            <person name="Tiedje J."/>
            <person name="Richardson P."/>
        </authorList>
    </citation>
    <scope>NUCLEOTIDE SEQUENCE [LARGE SCALE GENOMIC DNA]</scope>
    <source>
        <strain>MR-4</strain>
    </source>
</reference>
<comment type="function">
    <text evidence="1">Binds directly to 23S ribosomal RNA and is necessary for the in vitro assembly process of the 50S ribosomal subunit. It is not involved in the protein synthesizing functions of that subunit.</text>
</comment>
<comment type="similarity">
    <text evidence="1">Belongs to the bacterial ribosomal protein bL20 family.</text>
</comment>
<organism>
    <name type="scientific">Shewanella sp. (strain MR-4)</name>
    <dbReference type="NCBI Taxonomy" id="60480"/>
    <lineage>
        <taxon>Bacteria</taxon>
        <taxon>Pseudomonadati</taxon>
        <taxon>Pseudomonadota</taxon>
        <taxon>Gammaproteobacteria</taxon>
        <taxon>Alteromonadales</taxon>
        <taxon>Shewanellaceae</taxon>
        <taxon>Shewanella</taxon>
    </lineage>
</organism>
<protein>
    <recommendedName>
        <fullName evidence="1">Large ribosomal subunit protein bL20</fullName>
    </recommendedName>
    <alternativeName>
        <fullName evidence="2">50S ribosomal protein L20</fullName>
    </alternativeName>
</protein>
<proteinExistence type="inferred from homology"/>
<sequence length="118" mass="13567">MPRVKRGVTARARHKKVLKLAKGYYGARSRTYRVAVQAVTKAGQYAYRDRRQKKRQFRQLWIARINAAARQNGLSYSRFINGLKKASIEIDRKILADIAVFDKVVFATLVEKAKEALN</sequence>
<accession>Q0HIT6</accession>
<keyword id="KW-0687">Ribonucleoprotein</keyword>
<keyword id="KW-0689">Ribosomal protein</keyword>
<keyword id="KW-0694">RNA-binding</keyword>
<keyword id="KW-0699">rRNA-binding</keyword>
<dbReference type="EMBL" id="CP000446">
    <property type="protein sequence ID" value="ABI39031.1"/>
    <property type="molecule type" value="Genomic_DNA"/>
</dbReference>
<dbReference type="RefSeq" id="WP_006081652.1">
    <property type="nucleotide sequence ID" value="NC_008321.1"/>
</dbReference>
<dbReference type="SMR" id="Q0HIT6"/>
<dbReference type="GeneID" id="94727990"/>
<dbReference type="KEGG" id="she:Shewmr4_1958"/>
<dbReference type="HOGENOM" id="CLU_123265_0_1_6"/>
<dbReference type="GO" id="GO:1990904">
    <property type="term" value="C:ribonucleoprotein complex"/>
    <property type="evidence" value="ECO:0007669"/>
    <property type="project" value="UniProtKB-KW"/>
</dbReference>
<dbReference type="GO" id="GO:0005840">
    <property type="term" value="C:ribosome"/>
    <property type="evidence" value="ECO:0007669"/>
    <property type="project" value="UniProtKB-KW"/>
</dbReference>
<dbReference type="GO" id="GO:0019843">
    <property type="term" value="F:rRNA binding"/>
    <property type="evidence" value="ECO:0007669"/>
    <property type="project" value="UniProtKB-UniRule"/>
</dbReference>
<dbReference type="GO" id="GO:0003735">
    <property type="term" value="F:structural constituent of ribosome"/>
    <property type="evidence" value="ECO:0007669"/>
    <property type="project" value="InterPro"/>
</dbReference>
<dbReference type="GO" id="GO:0000027">
    <property type="term" value="P:ribosomal large subunit assembly"/>
    <property type="evidence" value="ECO:0007669"/>
    <property type="project" value="UniProtKB-UniRule"/>
</dbReference>
<dbReference type="GO" id="GO:0006412">
    <property type="term" value="P:translation"/>
    <property type="evidence" value="ECO:0007669"/>
    <property type="project" value="InterPro"/>
</dbReference>
<dbReference type="CDD" id="cd07026">
    <property type="entry name" value="Ribosomal_L20"/>
    <property type="match status" value="1"/>
</dbReference>
<dbReference type="FunFam" id="1.10.1900.20:FF:000001">
    <property type="entry name" value="50S ribosomal protein L20"/>
    <property type="match status" value="1"/>
</dbReference>
<dbReference type="Gene3D" id="6.10.160.10">
    <property type="match status" value="1"/>
</dbReference>
<dbReference type="Gene3D" id="1.10.1900.20">
    <property type="entry name" value="Ribosomal protein L20"/>
    <property type="match status" value="1"/>
</dbReference>
<dbReference type="HAMAP" id="MF_00382">
    <property type="entry name" value="Ribosomal_bL20"/>
    <property type="match status" value="1"/>
</dbReference>
<dbReference type="InterPro" id="IPR005813">
    <property type="entry name" value="Ribosomal_bL20"/>
</dbReference>
<dbReference type="InterPro" id="IPR049946">
    <property type="entry name" value="RIBOSOMAL_L20_CS"/>
</dbReference>
<dbReference type="InterPro" id="IPR035566">
    <property type="entry name" value="Ribosomal_protein_bL20_C"/>
</dbReference>
<dbReference type="NCBIfam" id="TIGR01032">
    <property type="entry name" value="rplT_bact"/>
    <property type="match status" value="1"/>
</dbReference>
<dbReference type="PANTHER" id="PTHR10986">
    <property type="entry name" value="39S RIBOSOMAL PROTEIN L20"/>
    <property type="match status" value="1"/>
</dbReference>
<dbReference type="Pfam" id="PF00453">
    <property type="entry name" value="Ribosomal_L20"/>
    <property type="match status" value="1"/>
</dbReference>
<dbReference type="PRINTS" id="PR00062">
    <property type="entry name" value="RIBOSOMALL20"/>
</dbReference>
<dbReference type="SUPFAM" id="SSF74731">
    <property type="entry name" value="Ribosomal protein L20"/>
    <property type="match status" value="1"/>
</dbReference>
<dbReference type="PROSITE" id="PS00937">
    <property type="entry name" value="RIBOSOMAL_L20"/>
    <property type="match status" value="1"/>
</dbReference>
<feature type="chain" id="PRO_1000049071" description="Large ribosomal subunit protein bL20">
    <location>
        <begin position="1"/>
        <end position="118"/>
    </location>
</feature>
<gene>
    <name evidence="1" type="primary">rplT</name>
    <name type="ordered locus">Shewmr4_1958</name>
</gene>
<evidence type="ECO:0000255" key="1">
    <source>
        <dbReference type="HAMAP-Rule" id="MF_00382"/>
    </source>
</evidence>
<evidence type="ECO:0000305" key="2"/>
<name>RL20_SHESM</name>